<comment type="function">
    <text evidence="1">Component of the proteasome core, a large protease complex with broad specificity involved in protein degradation.</text>
</comment>
<comment type="catalytic activity">
    <reaction evidence="1">
        <text>Cleavage of peptide bonds with very broad specificity.</text>
        <dbReference type="EC" id="3.4.25.1"/>
    </reaction>
</comment>
<comment type="activity regulation">
    <text evidence="1">The formation of the proteasomal ATPase ARC-20S proteasome complex, likely via the docking of the C-termini of ARC into the intersubunit pockets in the alpha-rings, may trigger opening of the gate for substrate entry. Interconversion between the open-gate and close-gate conformations leads to a dynamic regulation of the 20S proteasome proteolysis activity.</text>
</comment>
<comment type="pathway">
    <text evidence="1">Protein degradation; proteasomal Pup-dependent pathway.</text>
</comment>
<comment type="subunit">
    <text evidence="1">The 20S proteasome core is composed of 14 alpha and 14 beta subunits that assemble into four stacked heptameric rings, resulting in a barrel-shaped structure. The two inner rings, each composed of seven catalytic beta subunits, are sandwiched by two outer rings, each composed of seven alpha subunits. The catalytic chamber with the active sites is on the inside of the barrel. Has a gated structure, the ends of the cylinder being occluded by the N-termini of the alpha-subunits. Is capped by the proteasome-associated ATPase, ARC.</text>
</comment>
<comment type="subcellular location">
    <subcellularLocation>
        <location evidence="1">Cytoplasm</location>
    </subcellularLocation>
</comment>
<comment type="similarity">
    <text evidence="1">Belongs to the peptidase T1B family.</text>
</comment>
<dbReference type="EC" id="3.4.25.1" evidence="1"/>
<dbReference type="EMBL" id="AP009493">
    <property type="protein sequence ID" value="BAG22688.1"/>
    <property type="molecule type" value="Genomic_DNA"/>
</dbReference>
<dbReference type="RefSeq" id="WP_003970167.1">
    <property type="nucleotide sequence ID" value="NC_010572.1"/>
</dbReference>
<dbReference type="SMR" id="B1W306"/>
<dbReference type="MEROPS" id="T01.005"/>
<dbReference type="KEGG" id="sgr:SGR_5859"/>
<dbReference type="eggNOG" id="COG0638">
    <property type="taxonomic scope" value="Bacteria"/>
</dbReference>
<dbReference type="HOGENOM" id="CLU_035750_2_0_11"/>
<dbReference type="UniPathway" id="UPA00997"/>
<dbReference type="Proteomes" id="UP000001685">
    <property type="component" value="Chromosome"/>
</dbReference>
<dbReference type="GO" id="GO:0005737">
    <property type="term" value="C:cytoplasm"/>
    <property type="evidence" value="ECO:0007669"/>
    <property type="project" value="UniProtKB-SubCell"/>
</dbReference>
<dbReference type="GO" id="GO:0019774">
    <property type="term" value="C:proteasome core complex, beta-subunit complex"/>
    <property type="evidence" value="ECO:0007669"/>
    <property type="project" value="UniProtKB-UniRule"/>
</dbReference>
<dbReference type="GO" id="GO:0004298">
    <property type="term" value="F:threonine-type endopeptidase activity"/>
    <property type="evidence" value="ECO:0007669"/>
    <property type="project" value="UniProtKB-UniRule"/>
</dbReference>
<dbReference type="GO" id="GO:0019941">
    <property type="term" value="P:modification-dependent protein catabolic process"/>
    <property type="evidence" value="ECO:0007669"/>
    <property type="project" value="UniProtKB-UniRule"/>
</dbReference>
<dbReference type="GO" id="GO:0010498">
    <property type="term" value="P:proteasomal protein catabolic process"/>
    <property type="evidence" value="ECO:0007669"/>
    <property type="project" value="UniProtKB-UniRule"/>
</dbReference>
<dbReference type="CDD" id="cd01906">
    <property type="entry name" value="proteasome_protease_HslV"/>
    <property type="match status" value="1"/>
</dbReference>
<dbReference type="FunFam" id="3.60.20.10:FF:000046">
    <property type="entry name" value="Proteasome subunit beta"/>
    <property type="match status" value="1"/>
</dbReference>
<dbReference type="Gene3D" id="3.60.20.10">
    <property type="entry name" value="Glutamine Phosphoribosylpyrophosphate, subunit 1, domain 1"/>
    <property type="match status" value="1"/>
</dbReference>
<dbReference type="HAMAP" id="MF_02113_B">
    <property type="entry name" value="Proteasome_B_B"/>
    <property type="match status" value="1"/>
</dbReference>
<dbReference type="InterPro" id="IPR029055">
    <property type="entry name" value="Ntn_hydrolases_N"/>
</dbReference>
<dbReference type="InterPro" id="IPR000243">
    <property type="entry name" value="Pept_T1A_subB"/>
</dbReference>
<dbReference type="InterPro" id="IPR001353">
    <property type="entry name" value="Proteasome_sua/b"/>
</dbReference>
<dbReference type="InterPro" id="IPR023333">
    <property type="entry name" value="Proteasome_suB-type"/>
</dbReference>
<dbReference type="InterPro" id="IPR022483">
    <property type="entry name" value="PSB_actinobac"/>
</dbReference>
<dbReference type="NCBIfam" id="TIGR03690">
    <property type="entry name" value="20S_bact_beta"/>
    <property type="match status" value="1"/>
</dbReference>
<dbReference type="PANTHER" id="PTHR32194:SF0">
    <property type="entry name" value="ATP-DEPENDENT PROTEASE SUBUNIT HSLV"/>
    <property type="match status" value="1"/>
</dbReference>
<dbReference type="PANTHER" id="PTHR32194">
    <property type="entry name" value="METALLOPROTEASE TLDD"/>
    <property type="match status" value="1"/>
</dbReference>
<dbReference type="Pfam" id="PF00227">
    <property type="entry name" value="Proteasome"/>
    <property type="match status" value="1"/>
</dbReference>
<dbReference type="PRINTS" id="PR00141">
    <property type="entry name" value="PROTEASOME"/>
</dbReference>
<dbReference type="SUPFAM" id="SSF56235">
    <property type="entry name" value="N-terminal nucleophile aminohydrolases (Ntn hydrolases)"/>
    <property type="match status" value="1"/>
</dbReference>
<dbReference type="PROSITE" id="PS51476">
    <property type="entry name" value="PROTEASOME_BETA_2"/>
    <property type="match status" value="1"/>
</dbReference>
<feature type="propeptide" id="PRO_0000397588" description="Removed in mature form; by autocatalysis" evidence="1">
    <location>
        <begin position="1"/>
        <end position="53"/>
    </location>
</feature>
<feature type="chain" id="PRO_0000397589" description="Proteasome subunit beta">
    <location>
        <begin position="54"/>
        <end position="281"/>
    </location>
</feature>
<feature type="active site" description="Nucleophile" evidence="1">
    <location>
        <position position="54"/>
    </location>
</feature>
<protein>
    <recommendedName>
        <fullName evidence="1">Proteasome subunit beta</fullName>
        <ecNumber evidence="1">3.4.25.1</ecNumber>
    </recommendedName>
    <alternativeName>
        <fullName evidence="1">20S proteasome beta subunit</fullName>
    </alternativeName>
    <alternativeName>
        <fullName evidence="1">Proteasome core protein PrcB</fullName>
    </alternativeName>
</protein>
<proteinExistence type="inferred from homology"/>
<gene>
    <name evidence="1" type="primary">prcB</name>
    <name type="ordered locus">SGR_5859</name>
</gene>
<sequence length="281" mass="30199">MEANTRSTGRLPAAFLTPGSSSFMDFLSDQSPEMLPGNRSLPPLQGAVEAPHGTTIVSASFPGGVVLAGDRRATMGNMIASRDMQKVFPADEYSAVGIAGTAGLAVEMVKLFQLELEHFEKVEGAQLSLEGKANRLSTMIRSNLAMAMQGLAVVPLFAGYDVDREKGRIFSYDVTGGRTEESGYAATGSGSIFARNAMKKLYREDLTEEQALTLVVQALYDAADDDSATGGPDVARRIFPIVTVITDEGFRRLTDQESSEIARSILERRLEQPDGPRAALL</sequence>
<accession>B1W306</accession>
<evidence type="ECO:0000255" key="1">
    <source>
        <dbReference type="HAMAP-Rule" id="MF_02113"/>
    </source>
</evidence>
<keyword id="KW-0068">Autocatalytic cleavage</keyword>
<keyword id="KW-0963">Cytoplasm</keyword>
<keyword id="KW-0378">Hydrolase</keyword>
<keyword id="KW-0645">Protease</keyword>
<keyword id="KW-0647">Proteasome</keyword>
<keyword id="KW-0888">Threonine protease</keyword>
<keyword id="KW-0865">Zymogen</keyword>
<name>PSB_STRGG</name>
<organism>
    <name type="scientific">Streptomyces griseus subsp. griseus (strain JCM 4626 / CBS 651.72 / NBRC 13350 / KCC S-0626 / ISP 5235)</name>
    <dbReference type="NCBI Taxonomy" id="455632"/>
    <lineage>
        <taxon>Bacteria</taxon>
        <taxon>Bacillati</taxon>
        <taxon>Actinomycetota</taxon>
        <taxon>Actinomycetes</taxon>
        <taxon>Kitasatosporales</taxon>
        <taxon>Streptomycetaceae</taxon>
        <taxon>Streptomyces</taxon>
    </lineage>
</organism>
<reference key="1">
    <citation type="journal article" date="2008" name="J. Bacteriol.">
        <title>Genome sequence of the streptomycin-producing microorganism Streptomyces griseus IFO 13350.</title>
        <authorList>
            <person name="Ohnishi Y."/>
            <person name="Ishikawa J."/>
            <person name="Hara H."/>
            <person name="Suzuki H."/>
            <person name="Ikenoya M."/>
            <person name="Ikeda H."/>
            <person name="Yamashita A."/>
            <person name="Hattori M."/>
            <person name="Horinouchi S."/>
        </authorList>
    </citation>
    <scope>NUCLEOTIDE SEQUENCE [LARGE SCALE GENOMIC DNA]</scope>
    <source>
        <strain>JCM 4626 / CBS 651.72 / NBRC 13350 / KCC S-0626 / ISP 5235</strain>
    </source>
</reference>